<reference key="1">
    <citation type="journal article" date="1996" name="Nucleic Acids Res.">
        <title>Complete sequence analysis of the genome of the bacterium Mycoplasma pneumoniae.</title>
        <authorList>
            <person name="Himmelreich R."/>
            <person name="Hilbert H."/>
            <person name="Plagens H."/>
            <person name="Pirkl E."/>
            <person name="Li B.-C."/>
            <person name="Herrmann R."/>
        </authorList>
    </citation>
    <scope>NUCLEOTIDE SEQUENCE [LARGE SCALE GENOMIC DNA]</scope>
    <source>
        <strain>ATCC 29342 / M129 / Subtype 1</strain>
    </source>
</reference>
<dbReference type="EC" id="1.1.1.17"/>
<dbReference type="EMBL" id="U00089">
    <property type="protein sequence ID" value="AAB95838.1"/>
    <property type="molecule type" value="Genomic_DNA"/>
</dbReference>
<dbReference type="PIR" id="S73516">
    <property type="entry name" value="S73516"/>
</dbReference>
<dbReference type="RefSeq" id="NP_110341.1">
    <property type="nucleotide sequence ID" value="NC_000912.1"/>
</dbReference>
<dbReference type="RefSeq" id="WP_010875009.1">
    <property type="nucleotide sequence ID" value="NZ_OU342337.1"/>
</dbReference>
<dbReference type="SMR" id="P78008"/>
<dbReference type="IntAct" id="P78008">
    <property type="interactions" value="1"/>
</dbReference>
<dbReference type="STRING" id="272634.MPN_652"/>
<dbReference type="EnsemblBacteria" id="AAB95838">
    <property type="protein sequence ID" value="AAB95838"/>
    <property type="gene ID" value="MPN_652"/>
</dbReference>
<dbReference type="KEGG" id="mpn:MPN_652"/>
<dbReference type="PATRIC" id="fig|272634.6.peg.716"/>
<dbReference type="HOGENOM" id="CLU_036089_2_0_14"/>
<dbReference type="OrthoDB" id="271711at2"/>
<dbReference type="BioCyc" id="MetaCyc:MONOMER-622"/>
<dbReference type="BioCyc" id="MPNE272634:G1GJ3-1039-MONOMER"/>
<dbReference type="Proteomes" id="UP000000808">
    <property type="component" value="Chromosome"/>
</dbReference>
<dbReference type="GO" id="GO:0005829">
    <property type="term" value="C:cytosol"/>
    <property type="evidence" value="ECO:0007669"/>
    <property type="project" value="TreeGrafter"/>
</dbReference>
<dbReference type="GO" id="GO:0008926">
    <property type="term" value="F:mannitol-1-phosphate 5-dehydrogenase activity"/>
    <property type="evidence" value="ECO:0007669"/>
    <property type="project" value="UniProtKB-UniRule"/>
</dbReference>
<dbReference type="GO" id="GO:0019592">
    <property type="term" value="P:mannitol catabolic process"/>
    <property type="evidence" value="ECO:0007669"/>
    <property type="project" value="TreeGrafter"/>
</dbReference>
<dbReference type="Gene3D" id="1.10.1040.10">
    <property type="entry name" value="N-(1-d-carboxylethyl)-l-norvaline Dehydrogenase, domain 2"/>
    <property type="match status" value="1"/>
</dbReference>
<dbReference type="Gene3D" id="3.40.50.720">
    <property type="entry name" value="NAD(P)-binding Rossmann-like Domain"/>
    <property type="match status" value="1"/>
</dbReference>
<dbReference type="HAMAP" id="MF_00196">
    <property type="entry name" value="Mannitol_dehydrog"/>
    <property type="match status" value="1"/>
</dbReference>
<dbReference type="InterPro" id="IPR008927">
    <property type="entry name" value="6-PGluconate_DH-like_C_sf"/>
</dbReference>
<dbReference type="InterPro" id="IPR013328">
    <property type="entry name" value="6PGD_dom2"/>
</dbReference>
<dbReference type="InterPro" id="IPR023028">
    <property type="entry name" value="Mannitol_1_phos_5_DH"/>
</dbReference>
<dbReference type="InterPro" id="IPR013118">
    <property type="entry name" value="Mannitol_DH_C"/>
</dbReference>
<dbReference type="InterPro" id="IPR013131">
    <property type="entry name" value="Mannitol_DH_N"/>
</dbReference>
<dbReference type="InterPro" id="IPR036291">
    <property type="entry name" value="NAD(P)-bd_dom_sf"/>
</dbReference>
<dbReference type="NCBIfam" id="NF002651">
    <property type="entry name" value="PRK02318.2-4"/>
    <property type="match status" value="1"/>
</dbReference>
<dbReference type="PANTHER" id="PTHR30524:SF0">
    <property type="entry name" value="ALTRONATE OXIDOREDUCTASE-RELATED"/>
    <property type="match status" value="1"/>
</dbReference>
<dbReference type="PANTHER" id="PTHR30524">
    <property type="entry name" value="MANNITOL-1-PHOSPHATE 5-DEHYDROGENASE"/>
    <property type="match status" value="1"/>
</dbReference>
<dbReference type="Pfam" id="PF01232">
    <property type="entry name" value="Mannitol_dh"/>
    <property type="match status" value="1"/>
</dbReference>
<dbReference type="Pfam" id="PF08125">
    <property type="entry name" value="Mannitol_dh_C"/>
    <property type="match status" value="1"/>
</dbReference>
<dbReference type="SUPFAM" id="SSF48179">
    <property type="entry name" value="6-phosphogluconate dehydrogenase C-terminal domain-like"/>
    <property type="match status" value="1"/>
</dbReference>
<dbReference type="SUPFAM" id="SSF51735">
    <property type="entry name" value="NAD(P)-binding Rossmann-fold domains"/>
    <property type="match status" value="1"/>
</dbReference>
<gene>
    <name type="primary">mtlD</name>
    <name type="ordered locus">MPN_652</name>
    <name type="ORF">MP190</name>
</gene>
<feature type="chain" id="PRO_0000170712" description="Mannitol-1-phosphate 5-dehydrogenase">
    <location>
        <begin position="1"/>
        <end position="364"/>
    </location>
</feature>
<feature type="binding site" evidence="1">
    <location>
        <begin position="6"/>
        <end position="17"/>
    </location>
    <ligand>
        <name>NAD(+)</name>
        <dbReference type="ChEBI" id="CHEBI:57540"/>
    </ligand>
</feature>
<accession>P78008</accession>
<comment type="catalytic activity">
    <reaction>
        <text>D-mannitol 1-phosphate + NAD(+) = beta-D-fructose 6-phosphate + NADH + H(+)</text>
        <dbReference type="Rhea" id="RHEA:19661"/>
        <dbReference type="ChEBI" id="CHEBI:15378"/>
        <dbReference type="ChEBI" id="CHEBI:57540"/>
        <dbReference type="ChEBI" id="CHEBI:57634"/>
        <dbReference type="ChEBI" id="CHEBI:57945"/>
        <dbReference type="ChEBI" id="CHEBI:61381"/>
        <dbReference type="EC" id="1.1.1.17"/>
    </reaction>
</comment>
<comment type="similarity">
    <text evidence="2">Belongs to the mannitol dehydrogenase family.</text>
</comment>
<protein>
    <recommendedName>
        <fullName>Mannitol-1-phosphate 5-dehydrogenase</fullName>
        <ecNumber>1.1.1.17</ecNumber>
    </recommendedName>
</protein>
<sequence length="364" mass="42271">MKRINVLHFGAGNIGRGVILPIYQQNDFSIDLVELNQNTVNELQKQKQYQVHYLDCDQSQLVNDFNTWNLKDEAKIIELMERADVISTSIGAKNLASLKTLFDKAKFHKRAIVLCFENGFRISSNFKNILQLNNTQVNFVDVVIDTIAPNFEKKANFLDIYCEKYSEIYAETFPLEIKGVNQKNSLDRFIIKKLLLVNALHSVIGLLGFQQKLKYVHETLQVKSNLTFVEKLAQQIIDALCAEYPEFNKNNLLSYGKNNLVRFANPKIQDLNTRLIREPLRKLNQNERFYAIYKLFKKNKIALNNILQVYLMVLKTNITDDTESQQIAKLINEKAWTELAKLSSLEESEWNLIKQELSREITKK</sequence>
<proteinExistence type="inferred from homology"/>
<keyword id="KW-0520">NAD</keyword>
<keyword id="KW-0560">Oxidoreductase</keyword>
<keyword id="KW-1185">Reference proteome</keyword>
<organism>
    <name type="scientific">Mycoplasma pneumoniae (strain ATCC 29342 / M129 / Subtype 1)</name>
    <name type="common">Mycoplasmoides pneumoniae</name>
    <dbReference type="NCBI Taxonomy" id="272634"/>
    <lineage>
        <taxon>Bacteria</taxon>
        <taxon>Bacillati</taxon>
        <taxon>Mycoplasmatota</taxon>
        <taxon>Mycoplasmoidales</taxon>
        <taxon>Mycoplasmoidaceae</taxon>
        <taxon>Mycoplasmoides</taxon>
    </lineage>
</organism>
<evidence type="ECO:0000250" key="1"/>
<evidence type="ECO:0000305" key="2"/>
<name>MTLD_MYCPN</name>